<reference key="1">
    <citation type="journal article" date="2006" name="Proc. Natl. Acad. Sci. U.S.A.">
        <title>Comparative genomics of the lactic acid bacteria.</title>
        <authorList>
            <person name="Makarova K.S."/>
            <person name="Slesarev A."/>
            <person name="Wolf Y.I."/>
            <person name="Sorokin A."/>
            <person name="Mirkin B."/>
            <person name="Koonin E.V."/>
            <person name="Pavlov A."/>
            <person name="Pavlova N."/>
            <person name="Karamychev V."/>
            <person name="Polouchine N."/>
            <person name="Shakhova V."/>
            <person name="Grigoriev I."/>
            <person name="Lou Y."/>
            <person name="Rohksar D."/>
            <person name="Lucas S."/>
            <person name="Huang K."/>
            <person name="Goodstein D.M."/>
            <person name="Hawkins T."/>
            <person name="Plengvidhya V."/>
            <person name="Welker D."/>
            <person name="Hughes J."/>
            <person name="Goh Y."/>
            <person name="Benson A."/>
            <person name="Baldwin K."/>
            <person name="Lee J.-H."/>
            <person name="Diaz-Muniz I."/>
            <person name="Dosti B."/>
            <person name="Smeianov V."/>
            <person name="Wechter W."/>
            <person name="Barabote R."/>
            <person name="Lorca G."/>
            <person name="Altermann E."/>
            <person name="Barrangou R."/>
            <person name="Ganesan B."/>
            <person name="Xie Y."/>
            <person name="Rawsthorne H."/>
            <person name="Tamir D."/>
            <person name="Parker C."/>
            <person name="Breidt F."/>
            <person name="Broadbent J.R."/>
            <person name="Hutkins R."/>
            <person name="O'Sullivan D."/>
            <person name="Steele J."/>
            <person name="Unlu G."/>
            <person name="Saier M.H. Jr."/>
            <person name="Klaenhammer T."/>
            <person name="Richardson P."/>
            <person name="Kozyavkin S."/>
            <person name="Weimer B.C."/>
            <person name="Mills D.A."/>
        </authorList>
    </citation>
    <scope>NUCLEOTIDE SEQUENCE [LARGE SCALE GENOMIC DNA]</scope>
    <source>
        <strain>ATCC BAA-365 / Lb-18</strain>
    </source>
</reference>
<sequence length="307" mass="32725">MSRKVLLVGDGAVGSNFANDLLQTTQVDELVICDLNKDRAAGDCLDLEDMTYFTGQTKLRAGDYSDAADADVVVITAGVPRKPGESRLDLIKKNEAILRSIVDPVVASGFSGIFVVSANPVDILTTLTQKLSGFPKKRVIGTGTSLDSARLRVELAKRLQVPIESVNAWVLGEHGDSSFENFSSAVVNGKPLLDYPGMTEAALDEIEAHVREKGSEIIVKKGATYYGVAMMLAKIVTAILENNDLALPLSAPLHGEYGIKDEIYLGTLAIINGQGISHVLELPLNDSELAKMRASAATIKATLDSLG</sequence>
<feature type="chain" id="PRO_1000060439" description="L-lactate dehydrogenase">
    <location>
        <begin position="1"/>
        <end position="307"/>
    </location>
</feature>
<feature type="active site" description="Proton acceptor" evidence="1">
    <location>
        <position position="174"/>
    </location>
</feature>
<feature type="binding site" evidence="1">
    <location>
        <position position="13"/>
    </location>
    <ligand>
        <name>NAD(+)</name>
        <dbReference type="ChEBI" id="CHEBI:57540"/>
    </ligand>
</feature>
<feature type="binding site" evidence="1">
    <location>
        <position position="34"/>
    </location>
    <ligand>
        <name>NAD(+)</name>
        <dbReference type="ChEBI" id="CHEBI:57540"/>
    </ligand>
</feature>
<feature type="binding site" evidence="1">
    <location>
        <position position="39"/>
    </location>
    <ligand>
        <name>NAD(+)</name>
        <dbReference type="ChEBI" id="CHEBI:57540"/>
    </ligand>
</feature>
<feature type="binding site" evidence="1">
    <location>
        <position position="64"/>
    </location>
    <ligand>
        <name>NAD(+)</name>
        <dbReference type="ChEBI" id="CHEBI:57540"/>
    </ligand>
</feature>
<feature type="binding site" evidence="1">
    <location>
        <begin position="78"/>
        <end position="79"/>
    </location>
    <ligand>
        <name>NAD(+)</name>
        <dbReference type="ChEBI" id="CHEBI:57540"/>
    </ligand>
</feature>
<feature type="binding site" evidence="1">
    <location>
        <position position="87"/>
    </location>
    <ligand>
        <name>substrate</name>
    </ligand>
</feature>
<feature type="binding site" evidence="1">
    <location>
        <position position="100"/>
    </location>
    <ligand>
        <name>NAD(+)</name>
        <dbReference type="ChEBI" id="CHEBI:57540"/>
    </ligand>
</feature>
<feature type="binding site" evidence="1">
    <location>
        <begin position="119"/>
        <end position="122"/>
    </location>
    <ligand>
        <name>substrate</name>
    </ligand>
</feature>
<feature type="binding site" evidence="1">
    <location>
        <position position="142"/>
    </location>
    <ligand>
        <name>NAD(+)</name>
        <dbReference type="ChEBI" id="CHEBI:57540"/>
    </ligand>
</feature>
<feature type="binding site" evidence="1">
    <location>
        <begin position="147"/>
        <end position="150"/>
    </location>
    <ligand>
        <name>substrate</name>
    </ligand>
</feature>
<feature type="binding site" evidence="1">
    <location>
        <position position="224"/>
    </location>
    <ligand>
        <name>substrate</name>
    </ligand>
</feature>
<gene>
    <name evidence="1" type="primary">ldh</name>
    <name type="ordered locus">LBUL_0100</name>
</gene>
<evidence type="ECO:0000255" key="1">
    <source>
        <dbReference type="HAMAP-Rule" id="MF_00488"/>
    </source>
</evidence>
<keyword id="KW-0963">Cytoplasm</keyword>
<keyword id="KW-0520">NAD</keyword>
<keyword id="KW-0560">Oxidoreductase</keyword>
<proteinExistence type="inferred from homology"/>
<accession>Q04CN9</accession>
<comment type="function">
    <text evidence="1">Catalyzes the conversion of lactate to pyruvate.</text>
</comment>
<comment type="catalytic activity">
    <reaction evidence="1">
        <text>(S)-lactate + NAD(+) = pyruvate + NADH + H(+)</text>
        <dbReference type="Rhea" id="RHEA:23444"/>
        <dbReference type="ChEBI" id="CHEBI:15361"/>
        <dbReference type="ChEBI" id="CHEBI:15378"/>
        <dbReference type="ChEBI" id="CHEBI:16651"/>
        <dbReference type="ChEBI" id="CHEBI:57540"/>
        <dbReference type="ChEBI" id="CHEBI:57945"/>
        <dbReference type="EC" id="1.1.1.27"/>
    </reaction>
</comment>
<comment type="pathway">
    <text evidence="1">Fermentation; pyruvate fermentation to lactate; (S)-lactate from pyruvate: step 1/1.</text>
</comment>
<comment type="subunit">
    <text evidence="1">Homotetramer.</text>
</comment>
<comment type="subcellular location">
    <subcellularLocation>
        <location evidence="1">Cytoplasm</location>
    </subcellularLocation>
</comment>
<comment type="similarity">
    <text evidence="1">Belongs to the LDH/MDH superfamily. LDH family.</text>
</comment>
<organism>
    <name type="scientific">Lactobacillus delbrueckii subsp. bulgaricus (strain ATCC BAA-365 / Lb-18)</name>
    <dbReference type="NCBI Taxonomy" id="321956"/>
    <lineage>
        <taxon>Bacteria</taxon>
        <taxon>Bacillati</taxon>
        <taxon>Bacillota</taxon>
        <taxon>Bacilli</taxon>
        <taxon>Lactobacillales</taxon>
        <taxon>Lactobacillaceae</taxon>
        <taxon>Lactobacillus</taxon>
    </lineage>
</organism>
<name>LDH_LACDB</name>
<protein>
    <recommendedName>
        <fullName evidence="1">L-lactate dehydrogenase</fullName>
        <shortName evidence="1">L-LDH</shortName>
        <ecNumber evidence="1">1.1.1.27</ecNumber>
    </recommendedName>
</protein>
<dbReference type="EC" id="1.1.1.27" evidence="1"/>
<dbReference type="EMBL" id="CP000412">
    <property type="protein sequence ID" value="ABJ57783.1"/>
    <property type="molecule type" value="Genomic_DNA"/>
</dbReference>
<dbReference type="RefSeq" id="WP_011677908.1">
    <property type="nucleotide sequence ID" value="NC_008529.1"/>
</dbReference>
<dbReference type="SMR" id="Q04CN9"/>
<dbReference type="KEGG" id="lbu:LBUL_0100"/>
<dbReference type="HOGENOM" id="CLU_045401_1_1_9"/>
<dbReference type="BioCyc" id="LDEL321956:LBUL_RS00465-MONOMER"/>
<dbReference type="UniPathway" id="UPA00554">
    <property type="reaction ID" value="UER00611"/>
</dbReference>
<dbReference type="GO" id="GO:0005737">
    <property type="term" value="C:cytoplasm"/>
    <property type="evidence" value="ECO:0007669"/>
    <property type="project" value="UniProtKB-SubCell"/>
</dbReference>
<dbReference type="GO" id="GO:0004459">
    <property type="term" value="F:L-lactate dehydrogenase activity"/>
    <property type="evidence" value="ECO:0007669"/>
    <property type="project" value="UniProtKB-UniRule"/>
</dbReference>
<dbReference type="GO" id="GO:0006096">
    <property type="term" value="P:glycolytic process"/>
    <property type="evidence" value="ECO:0007669"/>
    <property type="project" value="UniProtKB-UniRule"/>
</dbReference>
<dbReference type="GO" id="GO:0006089">
    <property type="term" value="P:lactate metabolic process"/>
    <property type="evidence" value="ECO:0007669"/>
    <property type="project" value="TreeGrafter"/>
</dbReference>
<dbReference type="CDD" id="cd05291">
    <property type="entry name" value="HicDH_like"/>
    <property type="match status" value="1"/>
</dbReference>
<dbReference type="FunFam" id="3.40.50.720:FF:000018">
    <property type="entry name" value="Malate dehydrogenase"/>
    <property type="match status" value="1"/>
</dbReference>
<dbReference type="Gene3D" id="3.90.110.10">
    <property type="entry name" value="Lactate dehydrogenase/glycoside hydrolase, family 4, C-terminal"/>
    <property type="match status" value="1"/>
</dbReference>
<dbReference type="Gene3D" id="3.40.50.720">
    <property type="entry name" value="NAD(P)-binding Rossmann-like Domain"/>
    <property type="match status" value="1"/>
</dbReference>
<dbReference type="HAMAP" id="MF_00488">
    <property type="entry name" value="Lactate_dehydrog"/>
    <property type="match status" value="1"/>
</dbReference>
<dbReference type="InterPro" id="IPR001557">
    <property type="entry name" value="L-lactate/malate_DH"/>
</dbReference>
<dbReference type="InterPro" id="IPR011304">
    <property type="entry name" value="L-lactate_DH"/>
</dbReference>
<dbReference type="InterPro" id="IPR018177">
    <property type="entry name" value="L-lactate_DH_AS"/>
</dbReference>
<dbReference type="InterPro" id="IPR022383">
    <property type="entry name" value="Lactate/malate_DH_C"/>
</dbReference>
<dbReference type="InterPro" id="IPR001236">
    <property type="entry name" value="Lactate/malate_DH_N"/>
</dbReference>
<dbReference type="InterPro" id="IPR015955">
    <property type="entry name" value="Lactate_DH/Glyco_Ohase_4_C"/>
</dbReference>
<dbReference type="InterPro" id="IPR036291">
    <property type="entry name" value="NAD(P)-bd_dom_sf"/>
</dbReference>
<dbReference type="NCBIfam" id="TIGR01771">
    <property type="entry name" value="L-LDH-NAD"/>
    <property type="match status" value="1"/>
</dbReference>
<dbReference type="NCBIfam" id="NF000824">
    <property type="entry name" value="PRK00066.1"/>
    <property type="match status" value="1"/>
</dbReference>
<dbReference type="PANTHER" id="PTHR43128">
    <property type="entry name" value="L-2-HYDROXYCARBOXYLATE DEHYDROGENASE (NAD(P)(+))"/>
    <property type="match status" value="1"/>
</dbReference>
<dbReference type="PANTHER" id="PTHR43128:SF16">
    <property type="entry name" value="L-LACTATE DEHYDROGENASE"/>
    <property type="match status" value="1"/>
</dbReference>
<dbReference type="Pfam" id="PF02866">
    <property type="entry name" value="Ldh_1_C"/>
    <property type="match status" value="1"/>
</dbReference>
<dbReference type="Pfam" id="PF00056">
    <property type="entry name" value="Ldh_1_N"/>
    <property type="match status" value="1"/>
</dbReference>
<dbReference type="PIRSF" id="PIRSF000102">
    <property type="entry name" value="Lac_mal_DH"/>
    <property type="match status" value="1"/>
</dbReference>
<dbReference type="PRINTS" id="PR00086">
    <property type="entry name" value="LLDHDRGNASE"/>
</dbReference>
<dbReference type="SUPFAM" id="SSF56327">
    <property type="entry name" value="LDH C-terminal domain-like"/>
    <property type="match status" value="1"/>
</dbReference>
<dbReference type="SUPFAM" id="SSF51735">
    <property type="entry name" value="NAD(P)-binding Rossmann-fold domains"/>
    <property type="match status" value="1"/>
</dbReference>
<dbReference type="PROSITE" id="PS00064">
    <property type="entry name" value="L_LDH"/>
    <property type="match status" value="1"/>
</dbReference>